<organism>
    <name type="scientific">Salmonella typhimurium (strain LT2 / SGSC1412 / ATCC 700720)</name>
    <dbReference type="NCBI Taxonomy" id="99287"/>
    <lineage>
        <taxon>Bacteria</taxon>
        <taxon>Pseudomonadati</taxon>
        <taxon>Pseudomonadota</taxon>
        <taxon>Gammaproteobacteria</taxon>
        <taxon>Enterobacterales</taxon>
        <taxon>Enterobacteriaceae</taxon>
        <taxon>Salmonella</taxon>
    </lineage>
</organism>
<protein>
    <recommendedName>
        <fullName>Phase 2 flagellin</fullName>
    </recommendedName>
</protein>
<reference key="1">
    <citation type="journal article" date="1995" name="J. Bacteriol.">
        <title>Molecular analyses of the phase-2 antigen complex 1,2, of Salmonella spp.</title>
        <authorList>
            <person name="Vanegas R.A."/>
            <person name="Joys T.M."/>
        </authorList>
    </citation>
    <scope>NUCLEOTIDE SEQUENCE [GENOMIC DNA]</scope>
    <source>
        <strain>SL 375</strain>
    </source>
</reference>
<reference key="2">
    <citation type="journal article" date="2001" name="Nature">
        <title>Complete genome sequence of Salmonella enterica serovar Typhimurium LT2.</title>
        <authorList>
            <person name="McClelland M."/>
            <person name="Sanderson K.E."/>
            <person name="Spieth J."/>
            <person name="Clifton S.W."/>
            <person name="Latreille P."/>
            <person name="Courtney L."/>
            <person name="Porwollik S."/>
            <person name="Ali J."/>
            <person name="Dante M."/>
            <person name="Du F."/>
            <person name="Hou S."/>
            <person name="Layman D."/>
            <person name="Leonard S."/>
            <person name="Nguyen C."/>
            <person name="Scott K."/>
            <person name="Holmes A."/>
            <person name="Grewal N."/>
            <person name="Mulvaney E."/>
            <person name="Ryan E."/>
            <person name="Sun H."/>
            <person name="Florea L."/>
            <person name="Miller W."/>
            <person name="Stoneking T."/>
            <person name="Nhan M."/>
            <person name="Waterston R."/>
            <person name="Wilson R.K."/>
        </authorList>
    </citation>
    <scope>NUCLEOTIDE SEQUENCE [LARGE SCALE GENOMIC DNA]</scope>
    <source>
        <strain>LT2 / SGSC1412 / ATCC 700720</strain>
    </source>
</reference>
<reference key="3">
    <citation type="journal article" date="1981" name="Cold Spring Harb. Symp. Quant. Biol.">
        <title>Analysis of the functional components of the phase variation system.</title>
        <authorList>
            <person name="Silverman M."/>
            <person name="Zieg J."/>
            <person name="Mandel G."/>
            <person name="Simon M."/>
        </authorList>
    </citation>
    <scope>NUCLEOTIDE SEQUENCE [GENOMIC DNA] OF 1-38</scope>
</reference>
<reference key="4">
    <citation type="submission" date="1994-01" db="EMBL/GenBank/DDBJ databases">
        <authorList>
            <person name="Mingorance J."/>
            <person name="Tanaka S."/>
            <person name="Tominaga A."/>
            <person name="Enomoto M."/>
        </authorList>
    </citation>
    <scope>NUCLEOTIDE SEQUENCE [GENOMIC DNA] OF 483-506</scope>
    <source>
        <strain>SJ2353</strain>
    </source>
</reference>
<name>FLJB_SALTY</name>
<feature type="initiator methionine" description="Removed" evidence="1">
    <location>
        <position position="1"/>
    </location>
</feature>
<feature type="chain" id="PRO_0000182580" description="Phase 2 flagellin">
    <location>
        <begin position="2"/>
        <end position="506"/>
    </location>
</feature>
<feature type="sequence conflict" description="In Ref. 3; CAA24655." evidence="2" ref="3">
    <original>I</original>
    <variation>S</variation>
    <location>
        <position position="38"/>
    </location>
</feature>
<feature type="helix" evidence="3">
    <location>
        <begin position="55"/>
        <end position="99"/>
    </location>
</feature>
<feature type="helix" evidence="3">
    <location>
        <begin position="106"/>
        <end position="129"/>
    </location>
</feature>
<feature type="turn" evidence="3">
    <location>
        <begin position="137"/>
        <end position="139"/>
    </location>
</feature>
<feature type="strand" evidence="3">
    <location>
        <begin position="142"/>
        <end position="147"/>
    </location>
</feature>
<feature type="strand" evidence="3">
    <location>
        <begin position="149"/>
        <end position="151"/>
    </location>
</feature>
<feature type="strand" evidence="3">
    <location>
        <begin position="155"/>
        <end position="160"/>
    </location>
</feature>
<feature type="turn" evidence="3">
    <location>
        <begin position="165"/>
        <end position="169"/>
    </location>
</feature>
<feature type="strand" evidence="3">
    <location>
        <begin position="180"/>
        <end position="185"/>
    </location>
</feature>
<feature type="strand" evidence="3">
    <location>
        <begin position="187"/>
        <end position="192"/>
    </location>
</feature>
<feature type="helix" evidence="3">
    <location>
        <begin position="205"/>
        <end position="212"/>
    </location>
</feature>
<feature type="strand" evidence="3">
    <location>
        <begin position="216"/>
        <end position="221"/>
    </location>
</feature>
<feature type="helix" evidence="3">
    <location>
        <begin position="222"/>
        <end position="224"/>
    </location>
</feature>
<feature type="strand" evidence="3">
    <location>
        <begin position="227"/>
        <end position="229"/>
    </location>
</feature>
<feature type="turn" evidence="3">
    <location>
        <begin position="230"/>
        <end position="233"/>
    </location>
</feature>
<feature type="strand" evidence="3">
    <location>
        <begin position="234"/>
        <end position="242"/>
    </location>
</feature>
<feature type="helix" evidence="3">
    <location>
        <begin position="244"/>
        <end position="249"/>
    </location>
</feature>
<feature type="strand" evidence="3">
    <location>
        <begin position="251"/>
        <end position="257"/>
    </location>
</feature>
<feature type="strand" evidence="3">
    <location>
        <begin position="259"/>
        <end position="261"/>
    </location>
</feature>
<feature type="strand" evidence="3">
    <location>
        <begin position="286"/>
        <end position="291"/>
    </location>
</feature>
<feature type="helix" evidence="3">
    <location>
        <begin position="296"/>
        <end position="304"/>
    </location>
</feature>
<feature type="helix" evidence="3">
    <location>
        <begin position="309"/>
        <end position="313"/>
    </location>
</feature>
<feature type="strand" evidence="3">
    <location>
        <begin position="316"/>
        <end position="323"/>
    </location>
</feature>
<feature type="strand" evidence="3">
    <location>
        <begin position="329"/>
        <end position="338"/>
    </location>
</feature>
<feature type="strand" evidence="3">
    <location>
        <begin position="341"/>
        <end position="347"/>
    </location>
</feature>
<feature type="turn" evidence="3">
    <location>
        <begin position="349"/>
        <end position="351"/>
    </location>
</feature>
<feature type="strand" evidence="3">
    <location>
        <begin position="354"/>
        <end position="356"/>
    </location>
</feature>
<feature type="strand" evidence="3">
    <location>
        <begin position="358"/>
        <end position="362"/>
    </location>
</feature>
<feature type="strand" evidence="3">
    <location>
        <begin position="368"/>
        <end position="372"/>
    </location>
</feature>
<feature type="strand" evidence="3">
    <location>
        <begin position="374"/>
        <end position="376"/>
    </location>
</feature>
<feature type="turn" evidence="3">
    <location>
        <begin position="377"/>
        <end position="379"/>
    </location>
</feature>
<feature type="strand" evidence="3">
    <location>
        <begin position="382"/>
        <end position="387"/>
    </location>
</feature>
<feature type="strand" evidence="3">
    <location>
        <begin position="390"/>
        <end position="393"/>
    </location>
</feature>
<feature type="helix" evidence="3">
    <location>
        <begin position="394"/>
        <end position="397"/>
    </location>
</feature>
<feature type="turn" evidence="3">
    <location>
        <begin position="402"/>
        <end position="404"/>
    </location>
</feature>
<feature type="helix" evidence="3">
    <location>
        <begin position="419"/>
        <end position="458"/>
    </location>
</feature>
<accession>P52616</accession>
<accession>P97159</accession>
<evidence type="ECO:0000250" key="1"/>
<evidence type="ECO:0000305" key="2"/>
<evidence type="ECO:0007829" key="3">
    <source>
        <dbReference type="PDB" id="6RGV"/>
    </source>
</evidence>
<keyword id="KW-0002">3D-structure</keyword>
<keyword id="KW-0975">Bacterial flagellum</keyword>
<keyword id="KW-1185">Reference proteome</keyword>
<keyword id="KW-0964">Secreted</keyword>
<proteinExistence type="evidence at protein level"/>
<gene>
    <name type="primary">fljB</name>
    <name type="synonym">H2</name>
    <name type="ordered locus">STM2771</name>
</gene>
<dbReference type="EMBL" id="U17177">
    <property type="protein sequence ID" value="AAC43354.1"/>
    <property type="molecule type" value="Genomic_DNA"/>
</dbReference>
<dbReference type="EMBL" id="AE006468">
    <property type="protein sequence ID" value="AAL21657.1"/>
    <property type="molecule type" value="Genomic_DNA"/>
</dbReference>
<dbReference type="EMBL" id="V01370">
    <property type="protein sequence ID" value="CAA24655.1"/>
    <property type="molecule type" value="Genomic_DNA"/>
</dbReference>
<dbReference type="EMBL" id="D26168">
    <property type="protein sequence ID" value="BAA05156.1"/>
    <property type="molecule type" value="Genomic_DNA"/>
</dbReference>
<dbReference type="RefSeq" id="NP_461698.1">
    <property type="nucleotide sequence ID" value="NC_003197.2"/>
</dbReference>
<dbReference type="RefSeq" id="WP_000079794.1">
    <property type="nucleotide sequence ID" value="NC_003197.2"/>
</dbReference>
<dbReference type="PDB" id="5YUD">
    <property type="method" value="EM"/>
    <property type="resolution" value="4.28 A"/>
    <property type="chains" value="C=31-52"/>
</dbReference>
<dbReference type="PDB" id="6RGV">
    <property type="method" value="X-ray"/>
    <property type="resolution" value="2.00 A"/>
    <property type="chains" value="A=55-462"/>
</dbReference>
<dbReference type="PDBsum" id="5YUD"/>
<dbReference type="PDBsum" id="6RGV"/>
<dbReference type="SMR" id="P52616"/>
<dbReference type="STRING" id="99287.STM2771"/>
<dbReference type="PaxDb" id="99287-STM2771"/>
<dbReference type="GeneID" id="1254294"/>
<dbReference type="KEGG" id="stm:STM2771"/>
<dbReference type="PATRIC" id="fig|99287.12.peg.2923"/>
<dbReference type="HOGENOM" id="CLU_011142_7_2_6"/>
<dbReference type="OMA" id="IASQTTY"/>
<dbReference type="PhylomeDB" id="P52616"/>
<dbReference type="BioCyc" id="SENT99287:STM2771-MONOMER"/>
<dbReference type="Reactome" id="R-GGA-433822">
    <property type="pathway name" value="NFkB and MAPK activation mediated by TRAF6"/>
</dbReference>
<dbReference type="Reactome" id="R-GGA-451534">
    <property type="pathway name" value="TLR5 cascade"/>
</dbReference>
<dbReference type="Reactome" id="R-GGA-977240">
    <property type="pathway name" value="MyD88 cascade initiated on plasma membrane"/>
</dbReference>
<dbReference type="Reactome" id="R-HSA-844623">
    <property type="pathway name" value="The IPAF inflammasome"/>
</dbReference>
<dbReference type="PHI-base" id="PHI:10341"/>
<dbReference type="PHI-base" id="PHI:11611"/>
<dbReference type="PHI-base" id="PHI:7448"/>
<dbReference type="PHI-base" id="PHI:8373"/>
<dbReference type="Proteomes" id="UP000001014">
    <property type="component" value="Chromosome"/>
</dbReference>
<dbReference type="GO" id="GO:0009288">
    <property type="term" value="C:bacterial-type flagellum"/>
    <property type="evidence" value="ECO:0007669"/>
    <property type="project" value="UniProtKB-SubCell"/>
</dbReference>
<dbReference type="GO" id="GO:0005576">
    <property type="term" value="C:extracellular region"/>
    <property type="evidence" value="ECO:0007669"/>
    <property type="project" value="UniProtKB-SubCell"/>
</dbReference>
<dbReference type="GO" id="GO:0005198">
    <property type="term" value="F:structural molecule activity"/>
    <property type="evidence" value="ECO:0007669"/>
    <property type="project" value="InterPro"/>
</dbReference>
<dbReference type="Gene3D" id="6.10.280.190">
    <property type="match status" value="1"/>
</dbReference>
<dbReference type="Gene3D" id="2.30.220.10">
    <property type="entry name" value="f41 fragment of flagellin, C-terminal domain"/>
    <property type="match status" value="1"/>
</dbReference>
<dbReference type="Gene3D" id="2.170.280.10">
    <property type="entry name" value="f41 fragment of flagellin, middle domain"/>
    <property type="match status" value="1"/>
</dbReference>
<dbReference type="Gene3D" id="1.20.1330.10">
    <property type="entry name" value="f41 fragment of flagellin, N-terminal domain"/>
    <property type="match status" value="1"/>
</dbReference>
<dbReference type="Gene3D" id="6.10.10.10">
    <property type="entry name" value="Flagellar export chaperone, C-terminal domain"/>
    <property type="match status" value="1"/>
</dbReference>
<dbReference type="InterPro" id="IPR001492">
    <property type="entry name" value="Flagellin"/>
</dbReference>
<dbReference type="InterPro" id="IPR046358">
    <property type="entry name" value="Flagellin_C"/>
</dbReference>
<dbReference type="InterPro" id="IPR042187">
    <property type="entry name" value="Flagellin_C_sub2"/>
</dbReference>
<dbReference type="InterPro" id="IPR014981">
    <property type="entry name" value="Flagellin_D3"/>
</dbReference>
<dbReference type="InterPro" id="IPR001029">
    <property type="entry name" value="Flagellin_N"/>
</dbReference>
<dbReference type="InterPro" id="IPR049365">
    <property type="entry name" value="FLIC_barrel"/>
</dbReference>
<dbReference type="NCBIfam" id="NF005953">
    <property type="entry name" value="PRK08026.1"/>
    <property type="match status" value="1"/>
</dbReference>
<dbReference type="PANTHER" id="PTHR42792">
    <property type="entry name" value="FLAGELLIN"/>
    <property type="match status" value="1"/>
</dbReference>
<dbReference type="PANTHER" id="PTHR42792:SF2">
    <property type="entry name" value="FLAGELLIN"/>
    <property type="match status" value="1"/>
</dbReference>
<dbReference type="Pfam" id="PF00700">
    <property type="entry name" value="Flagellin_C"/>
    <property type="match status" value="1"/>
</dbReference>
<dbReference type="Pfam" id="PF08884">
    <property type="entry name" value="Flagellin_D3"/>
    <property type="match status" value="1"/>
</dbReference>
<dbReference type="Pfam" id="PF00669">
    <property type="entry name" value="Flagellin_N"/>
    <property type="match status" value="1"/>
</dbReference>
<dbReference type="Pfam" id="PF21504">
    <property type="entry name" value="FLIC_barrel"/>
    <property type="match status" value="1"/>
</dbReference>
<dbReference type="PRINTS" id="PR00207">
    <property type="entry name" value="FLAGELLIN"/>
</dbReference>
<dbReference type="SUPFAM" id="SSF64518">
    <property type="entry name" value="Phase 1 flagellin"/>
    <property type="match status" value="1"/>
</dbReference>
<sequence length="506" mass="52536">MAQVINTNSLSLLTQNNLNKSQSALGTAIERLSSGLRINSAKDDAAGQAIANRFTANIKGLTQASRNANDGISIAQTTEGALNEINNNLQRVRELAVQSANSTNSQSDLDSIQAEITQRLNEIDRVSGQTQFNGVKVLAQDNTLTIQVGANDGETIDIDLKQINSQTLGLDSLNVQKAYDVKDTAVTTKAYANNGTTLDVSGLDDAAIKAATGGTNGTASVTGGAVKFDADNNKYFVTIGGFTGADAAKNGDYEVNVATDGTVTLAAGATKTTMPAGATTKTEVQELKDTPAVVSADAKNALIAGGVDATDANGAELVKMSYTDKNGKTIEGGYALKAGDKYYAADYDEATGAIKAKTTSYTAADGTTKTAANQLGGVDGKTEVVTIDGKTYNASKAAGHDFKAQPELAEAAAKTTENPLQKIDAALAQVDALRSDLGAVQNRFNSAITNLGNTVNNLSEARSRIEDSDYATEVSNMSRAQILQQAGTSVLAQANQVPQNVLSLLR</sequence>
<comment type="function">
    <text>Flagellin is the subunit protein which polymerizes to form the filaments of bacterial flagella.</text>
</comment>
<comment type="subcellular location">
    <subcellularLocation>
        <location>Secreted</location>
    </subcellularLocation>
    <subcellularLocation>
        <location>Bacterial flagellum</location>
    </subcellularLocation>
</comment>
<comment type="miscellaneous">
    <text>Individual Salmonella serotypes usually alternate between the production of 2 antigenic forms of flagella, termed phase 1 and phase 2, each specified by separate structural genes.</text>
</comment>
<comment type="similarity">
    <text evidence="2">Belongs to the bacterial flagellin family.</text>
</comment>